<keyword id="KW-1003">Cell membrane</keyword>
<keyword id="KW-0325">Glycoprotein</keyword>
<keyword id="KW-0336">GPI-anchor</keyword>
<keyword id="KW-0449">Lipoprotein</keyword>
<keyword id="KW-0472">Membrane</keyword>
<keyword id="KW-0654">Proteoglycan</keyword>
<keyword id="KW-1185">Reference proteome</keyword>
<keyword id="KW-0732">Signal</keyword>
<accession>Q8LEE9</accession>
<accession>Q94EG7</accession>
<accession>Q9FKJ8</accession>
<gene>
    <name type="primary">FLA12</name>
    <name type="ordered locus">At5g60490</name>
    <name type="ORF">MUF9.12</name>
</gene>
<organism>
    <name type="scientific">Arabidopsis thaliana</name>
    <name type="common">Mouse-ear cress</name>
    <dbReference type="NCBI Taxonomy" id="3702"/>
    <lineage>
        <taxon>Eukaryota</taxon>
        <taxon>Viridiplantae</taxon>
        <taxon>Streptophyta</taxon>
        <taxon>Embryophyta</taxon>
        <taxon>Tracheophyta</taxon>
        <taxon>Spermatophyta</taxon>
        <taxon>Magnoliopsida</taxon>
        <taxon>eudicotyledons</taxon>
        <taxon>Gunneridae</taxon>
        <taxon>Pentapetalae</taxon>
        <taxon>rosids</taxon>
        <taxon>malvids</taxon>
        <taxon>Brassicales</taxon>
        <taxon>Brassicaceae</taxon>
        <taxon>Camelineae</taxon>
        <taxon>Arabidopsis</taxon>
    </lineage>
</organism>
<proteinExistence type="evidence at transcript level"/>
<protein>
    <recommendedName>
        <fullName>Fasciclin-like arabinogalactan protein 12</fullName>
    </recommendedName>
</protein>
<feature type="signal peptide" evidence="1">
    <location>
        <begin position="1"/>
        <end position="24"/>
    </location>
</feature>
<feature type="chain" id="PRO_0000253871" description="Fasciclin-like arabinogalactan protein 12">
    <location>
        <begin position="25"/>
        <end position="220"/>
    </location>
</feature>
<feature type="propeptide" id="PRO_0000253872" description="Removed in mature form" evidence="1">
    <location>
        <begin position="221"/>
        <end position="249"/>
    </location>
</feature>
<feature type="domain" description="FAS1" evidence="2">
    <location>
        <begin position="37"/>
        <end position="181"/>
    </location>
</feature>
<feature type="region of interest" description="Disordered" evidence="3">
    <location>
        <begin position="186"/>
        <end position="219"/>
    </location>
</feature>
<feature type="lipid moiety-binding region" description="GPI-anchor amidated aspartate" evidence="1">
    <location>
        <position position="220"/>
    </location>
</feature>
<feature type="glycosylation site" description="N-linked (GlcNAc...) asparagine" evidence="1">
    <location>
        <position position="39"/>
    </location>
</feature>
<feature type="glycosylation site" description="N-linked (GlcNAc...) asparagine" evidence="1">
    <location>
        <position position="71"/>
    </location>
</feature>
<feature type="glycosylation site" description="N-linked (GlcNAc...) asparagine" evidence="1">
    <location>
        <position position="143"/>
    </location>
</feature>
<feature type="glycosylation site" description="N-linked (GlcNAc...) asparagine" evidence="1">
    <location>
        <position position="152"/>
    </location>
</feature>
<feature type="glycosylation site" description="N-linked (GlcNAc...) asparagine" evidence="1">
    <location>
        <position position="159"/>
    </location>
</feature>
<feature type="sequence conflict" description="In Ref. 4; AAM62683." evidence="4" ref="4">
    <location>
        <position position="16"/>
    </location>
</feature>
<feature type="sequence conflict" description="In Ref. 4; AAM62683." evidence="4" ref="4">
    <original>I</original>
    <variation>T</variation>
    <location>
        <position position="22"/>
    </location>
</feature>
<dbReference type="EMBL" id="AB011483">
    <property type="protein sequence ID" value="BAB08232.1"/>
    <property type="molecule type" value="Genomic_DNA"/>
</dbReference>
<dbReference type="EMBL" id="CP002688">
    <property type="protein sequence ID" value="AED97336.1"/>
    <property type="molecule type" value="Genomic_DNA"/>
</dbReference>
<dbReference type="EMBL" id="AF410335">
    <property type="protein sequence ID" value="AAK95321.1"/>
    <property type="status" value="ALT_FRAME"/>
    <property type="molecule type" value="mRNA"/>
</dbReference>
<dbReference type="EMBL" id="BT000530">
    <property type="protein sequence ID" value="AAN18099.1"/>
    <property type="status" value="ALT_FRAME"/>
    <property type="molecule type" value="mRNA"/>
</dbReference>
<dbReference type="EMBL" id="AY085457">
    <property type="protein sequence ID" value="AAM62683.1"/>
    <property type="molecule type" value="mRNA"/>
</dbReference>
<dbReference type="RefSeq" id="NP_200857.1">
    <property type="nucleotide sequence ID" value="NM_125442.3"/>
</dbReference>
<dbReference type="SMR" id="Q8LEE9"/>
<dbReference type="FunCoup" id="Q8LEE9">
    <property type="interactions" value="10"/>
</dbReference>
<dbReference type="STRING" id="3702.Q8LEE9"/>
<dbReference type="GlyCosmos" id="Q8LEE9">
    <property type="glycosylation" value="5 sites, No reported glycans"/>
</dbReference>
<dbReference type="GlyGen" id="Q8LEE9">
    <property type="glycosylation" value="5 sites"/>
</dbReference>
<dbReference type="PaxDb" id="3702-AT5G60490.1"/>
<dbReference type="ProteomicsDB" id="230624"/>
<dbReference type="EnsemblPlants" id="AT5G60490.1">
    <property type="protein sequence ID" value="AT5G60490.1"/>
    <property type="gene ID" value="AT5G60490"/>
</dbReference>
<dbReference type="GeneID" id="836170"/>
<dbReference type="Gramene" id="AT5G60490.1">
    <property type="protein sequence ID" value="AT5G60490.1"/>
    <property type="gene ID" value="AT5G60490"/>
</dbReference>
<dbReference type="KEGG" id="ath:AT5G60490"/>
<dbReference type="Araport" id="AT5G60490"/>
<dbReference type="TAIR" id="AT5G60490">
    <property type="gene designation" value="FLA12"/>
</dbReference>
<dbReference type="eggNOG" id="ENOG502QQ1S">
    <property type="taxonomic scope" value="Eukaryota"/>
</dbReference>
<dbReference type="HOGENOM" id="CLU_067693_1_0_1"/>
<dbReference type="InParanoid" id="Q8LEE9"/>
<dbReference type="OMA" id="KAADSEC"/>
<dbReference type="PhylomeDB" id="Q8LEE9"/>
<dbReference type="PRO" id="PR:Q8LEE9"/>
<dbReference type="Proteomes" id="UP000006548">
    <property type="component" value="Chromosome 5"/>
</dbReference>
<dbReference type="ExpressionAtlas" id="Q8LEE9">
    <property type="expression patterns" value="baseline and differential"/>
</dbReference>
<dbReference type="GO" id="GO:0005886">
    <property type="term" value="C:plasma membrane"/>
    <property type="evidence" value="ECO:0000314"/>
    <property type="project" value="TAIR"/>
</dbReference>
<dbReference type="GO" id="GO:0098552">
    <property type="term" value="C:side of membrane"/>
    <property type="evidence" value="ECO:0007669"/>
    <property type="project" value="UniProtKB-KW"/>
</dbReference>
<dbReference type="GO" id="GO:0009834">
    <property type="term" value="P:plant-type secondary cell wall biogenesis"/>
    <property type="evidence" value="ECO:0000315"/>
    <property type="project" value="TAIR"/>
</dbReference>
<dbReference type="FunFam" id="2.30.180.10:FF:000006">
    <property type="entry name" value="Fasciclin-like arabinogalactan protein 11"/>
    <property type="match status" value="1"/>
</dbReference>
<dbReference type="Gene3D" id="2.30.180.10">
    <property type="entry name" value="FAS1 domain"/>
    <property type="match status" value="1"/>
</dbReference>
<dbReference type="InterPro" id="IPR036378">
    <property type="entry name" value="FAS1_dom_sf"/>
</dbReference>
<dbReference type="InterPro" id="IPR000782">
    <property type="entry name" value="FAS1_domain"/>
</dbReference>
<dbReference type="InterPro" id="IPR045003">
    <property type="entry name" value="FLA_A"/>
</dbReference>
<dbReference type="PANTHER" id="PTHR32077">
    <property type="entry name" value="FASCICLIN-LIKE ARABINOGALACTAN PROTEIN"/>
    <property type="match status" value="1"/>
</dbReference>
<dbReference type="PANTHER" id="PTHR32077:SF59">
    <property type="entry name" value="FASCICLIN-LIKE ARABINOGALACTAN PROTEIN 12"/>
    <property type="match status" value="1"/>
</dbReference>
<dbReference type="Pfam" id="PF02469">
    <property type="entry name" value="Fasciclin"/>
    <property type="match status" value="1"/>
</dbReference>
<dbReference type="SMART" id="SM00554">
    <property type="entry name" value="FAS1"/>
    <property type="match status" value="1"/>
</dbReference>
<dbReference type="SUPFAM" id="SSF82153">
    <property type="entry name" value="FAS1 domain"/>
    <property type="match status" value="1"/>
</dbReference>
<dbReference type="PROSITE" id="PS50213">
    <property type="entry name" value="FAS1"/>
    <property type="match status" value="1"/>
</dbReference>
<name>FLA12_ARATH</name>
<comment type="function">
    <text>May be a cell surface adhesion protein.</text>
</comment>
<comment type="subcellular location">
    <subcellularLocation>
        <location evidence="4">Cell membrane</location>
        <topology evidence="4">Lipid-anchor</topology>
        <topology evidence="4">GPI-anchor</topology>
    </subcellularLocation>
</comment>
<comment type="similarity">
    <text evidence="4">Belongs to the fasciclin-like AGP family.</text>
</comment>
<comment type="sequence caution" evidence="4">
    <conflict type="frameshift">
        <sequence resource="EMBL-CDS" id="AAK95321"/>
    </conflict>
</comment>
<comment type="sequence caution" evidence="4">
    <conflict type="frameshift">
        <sequence resource="EMBL-CDS" id="AAN18099"/>
    </conflict>
</comment>
<reference key="1">
    <citation type="journal article" date="1998" name="DNA Res.">
        <title>Structural analysis of Arabidopsis thaliana chromosome 5. V. Sequence features of the regions of 1,381,565 bp covered by twenty one physically assigned P1 and TAC clones.</title>
        <authorList>
            <person name="Kaneko T."/>
            <person name="Kotani H."/>
            <person name="Nakamura Y."/>
            <person name="Sato S."/>
            <person name="Asamizu E."/>
            <person name="Miyajima N."/>
            <person name="Tabata S."/>
        </authorList>
    </citation>
    <scope>NUCLEOTIDE SEQUENCE [LARGE SCALE GENOMIC DNA]</scope>
    <source>
        <strain>cv. Columbia</strain>
    </source>
</reference>
<reference key="2">
    <citation type="journal article" date="2017" name="Plant J.">
        <title>Araport11: a complete reannotation of the Arabidopsis thaliana reference genome.</title>
        <authorList>
            <person name="Cheng C.Y."/>
            <person name="Krishnakumar V."/>
            <person name="Chan A.P."/>
            <person name="Thibaud-Nissen F."/>
            <person name="Schobel S."/>
            <person name="Town C.D."/>
        </authorList>
    </citation>
    <scope>GENOME REANNOTATION</scope>
    <source>
        <strain>cv. Columbia</strain>
    </source>
</reference>
<reference key="3">
    <citation type="journal article" date="2003" name="Science">
        <title>Empirical analysis of transcriptional activity in the Arabidopsis genome.</title>
        <authorList>
            <person name="Yamada K."/>
            <person name="Lim J."/>
            <person name="Dale J.M."/>
            <person name="Chen H."/>
            <person name="Shinn P."/>
            <person name="Palm C.J."/>
            <person name="Southwick A.M."/>
            <person name="Wu H.C."/>
            <person name="Kim C.J."/>
            <person name="Nguyen M."/>
            <person name="Pham P.K."/>
            <person name="Cheuk R.F."/>
            <person name="Karlin-Newmann G."/>
            <person name="Liu S.X."/>
            <person name="Lam B."/>
            <person name="Sakano H."/>
            <person name="Wu T."/>
            <person name="Yu G."/>
            <person name="Miranda M."/>
            <person name="Quach H.L."/>
            <person name="Tripp M."/>
            <person name="Chang C.H."/>
            <person name="Lee J.M."/>
            <person name="Toriumi M.J."/>
            <person name="Chan M.M."/>
            <person name="Tang C.C."/>
            <person name="Onodera C.S."/>
            <person name="Deng J.M."/>
            <person name="Akiyama K."/>
            <person name="Ansari Y."/>
            <person name="Arakawa T."/>
            <person name="Banh J."/>
            <person name="Banno F."/>
            <person name="Bowser L."/>
            <person name="Brooks S.Y."/>
            <person name="Carninci P."/>
            <person name="Chao Q."/>
            <person name="Choy N."/>
            <person name="Enju A."/>
            <person name="Goldsmith A.D."/>
            <person name="Gurjal M."/>
            <person name="Hansen N.F."/>
            <person name="Hayashizaki Y."/>
            <person name="Johnson-Hopson C."/>
            <person name="Hsuan V.W."/>
            <person name="Iida K."/>
            <person name="Karnes M."/>
            <person name="Khan S."/>
            <person name="Koesema E."/>
            <person name="Ishida J."/>
            <person name="Jiang P.X."/>
            <person name="Jones T."/>
            <person name="Kawai J."/>
            <person name="Kamiya A."/>
            <person name="Meyers C."/>
            <person name="Nakajima M."/>
            <person name="Narusaka M."/>
            <person name="Seki M."/>
            <person name="Sakurai T."/>
            <person name="Satou M."/>
            <person name="Tamse R."/>
            <person name="Vaysberg M."/>
            <person name="Wallender E.K."/>
            <person name="Wong C."/>
            <person name="Yamamura Y."/>
            <person name="Yuan S."/>
            <person name="Shinozaki K."/>
            <person name="Davis R.W."/>
            <person name="Theologis A."/>
            <person name="Ecker J.R."/>
        </authorList>
    </citation>
    <scope>NUCLEOTIDE SEQUENCE [LARGE SCALE MRNA]</scope>
    <source>
        <strain>cv. Columbia</strain>
    </source>
</reference>
<reference key="4">
    <citation type="submission" date="2002-03" db="EMBL/GenBank/DDBJ databases">
        <title>Full-length cDNA from Arabidopsis thaliana.</title>
        <authorList>
            <person name="Brover V.V."/>
            <person name="Troukhan M.E."/>
            <person name="Alexandrov N.A."/>
            <person name="Lu Y.-P."/>
            <person name="Flavell R.B."/>
            <person name="Feldmann K.A."/>
        </authorList>
    </citation>
    <scope>NUCLEOTIDE SEQUENCE [LARGE SCALE MRNA]</scope>
</reference>
<reference key="5">
    <citation type="journal article" date="2003" name="Plant Physiol.">
        <title>The fasciclin-like arabinogalactan proteins of Arabidopsis. A multigene family of putative cell adhesion molecules.</title>
        <authorList>
            <person name="Johnson K.L."/>
            <person name="Jones B.J."/>
            <person name="Bacic A."/>
            <person name="Schultz C.J."/>
        </authorList>
    </citation>
    <scope>GENE FAMILY ORGANIZATION</scope>
    <scope>NOMENCLATURE</scope>
</reference>
<sequence length="249" mass="26367">MEHSLIILLFTVLLLLTTTPGILSQPSPAVAPAPPGPTNVTKILEKAGQFTVFIRLLKSTGVANQLYGQLNNSDNGITIFAPSDSSFTGLKAGTLNSLTDEQQVELIQFHVIPSYVSSSNFQTISNPLRTQAGDSADGHFPLNVTTSGNTVNITSGVTNTTVSGNVYSDGQLAVYQVDKVLLPQQVFDPRPPAPAPAPSVSKSKKKKDDSDSSSDDSPADASFALRNVGSVCDAVSFCVMSVMLAWFYL</sequence>
<evidence type="ECO:0000255" key="1"/>
<evidence type="ECO:0000255" key="2">
    <source>
        <dbReference type="PROSITE-ProRule" id="PRU00082"/>
    </source>
</evidence>
<evidence type="ECO:0000256" key="3">
    <source>
        <dbReference type="SAM" id="MobiDB-lite"/>
    </source>
</evidence>
<evidence type="ECO:0000305" key="4"/>